<organism>
    <name type="scientific">Human cytomegalovirus (strain AD169)</name>
    <name type="common">HHV-5</name>
    <name type="synonym">Human herpesvirus 5</name>
    <dbReference type="NCBI Taxonomy" id="10360"/>
    <lineage>
        <taxon>Viruses</taxon>
        <taxon>Duplodnaviria</taxon>
        <taxon>Heunggongvirae</taxon>
        <taxon>Peploviricota</taxon>
        <taxon>Herviviricetes</taxon>
        <taxon>Herpesvirales</taxon>
        <taxon>Orthoherpesviridae</taxon>
        <taxon>Betaherpesvirinae</taxon>
        <taxon>Cytomegalovirus</taxon>
        <taxon>Cytomegalovirus humanbeta5</taxon>
        <taxon>Human cytomegalovirus</taxon>
    </lineage>
</organism>
<dbReference type="EMBL" id="X17403">
    <property type="protein sequence ID" value="CAA35358.1"/>
    <property type="molecule type" value="Genomic_DNA"/>
</dbReference>
<dbReference type="EMBL" id="BK000394">
    <property type="protein sequence ID" value="DAA00181.1"/>
    <property type="molecule type" value="Genomic_DNA"/>
</dbReference>
<dbReference type="PIR" id="S09848">
    <property type="entry name" value="WMBEDE"/>
</dbReference>
<dbReference type="SMR" id="P16727"/>
<dbReference type="Proteomes" id="UP000008991">
    <property type="component" value="Segment"/>
</dbReference>
<dbReference type="Proteomes" id="UP000008992">
    <property type="component" value="Segment"/>
</dbReference>
<dbReference type="GO" id="GO:0030430">
    <property type="term" value="C:host cell cytoplasm"/>
    <property type="evidence" value="ECO:0007669"/>
    <property type="project" value="UniProtKB-SubCell"/>
</dbReference>
<dbReference type="GO" id="GO:0042025">
    <property type="term" value="C:host cell nucleus"/>
    <property type="evidence" value="ECO:0007669"/>
    <property type="project" value="UniProtKB-SubCell"/>
</dbReference>
<dbReference type="InterPro" id="IPR010436">
    <property type="entry name" value="Herpes_UL84"/>
</dbReference>
<dbReference type="Pfam" id="PF06284">
    <property type="entry name" value="Cytomega_UL84"/>
    <property type="match status" value="1"/>
</dbReference>
<protein>
    <recommendedName>
        <fullName>Protein UL84</fullName>
    </recommendedName>
</protein>
<gene>
    <name type="primary">UL84</name>
</gene>
<reference key="1">
    <citation type="journal article" date="1990" name="Curr. Top. Microbiol. Immunol.">
        <title>Analysis of the protein-coding content of the sequence of human cytomegalovirus strain AD169.</title>
        <authorList>
            <person name="Chee M.S."/>
            <person name="Bankier A.T."/>
            <person name="Beck S."/>
            <person name="Bohni R."/>
            <person name="Brown C.M."/>
            <person name="Cerny R."/>
            <person name="Horsnell T."/>
            <person name="Hutchison C.A. III"/>
            <person name="Kouzarides T."/>
            <person name="Martignetti J.A."/>
            <person name="Preddie E."/>
            <person name="Satchwell S.C."/>
            <person name="Tomlinson P."/>
            <person name="Weston K.M."/>
            <person name="Barrell B.G."/>
        </authorList>
    </citation>
    <scope>NUCLEOTIDE SEQUENCE [LARGE SCALE GENOMIC DNA]</scope>
</reference>
<reference key="2">
    <citation type="journal article" date="2003" name="J. Gen. Virol.">
        <title>The human cytomegalovirus genome revisited: comparison with the chimpanzee cytomegalovirus genome.</title>
        <authorList>
            <person name="Davison A.J."/>
            <person name="Dolan A."/>
            <person name="Akter P."/>
            <person name="Addison C."/>
            <person name="Dargan D.J."/>
            <person name="Alcendor D.J."/>
            <person name="McGeoch D.J."/>
            <person name="Hayward G.S."/>
        </authorList>
    </citation>
    <scope>GENOME REANNOTATION</scope>
</reference>
<reference key="3">
    <citation type="journal article" date="2003" name="J. Gen. Virol.">
        <authorList>
            <person name="Davison A.J."/>
            <person name="Dolan A."/>
            <person name="Akter P."/>
            <person name="Addison C."/>
            <person name="Dargan D.J."/>
            <person name="Alcendor D.J."/>
            <person name="McGeoch D.J."/>
            <person name="Hayward G.S."/>
        </authorList>
    </citation>
    <scope>ERRATUM OF PUBMED:12533697</scope>
</reference>
<reference key="4">
    <citation type="journal article" date="2004" name="J. Virol.">
        <title>Identification of proteins in human cytomegalovirus (HCMV) particles: the HCMV proteome.</title>
        <authorList>
            <person name="Varnum S.M."/>
            <person name="Streblow D.N."/>
            <person name="Monroe M.E."/>
            <person name="Smith P."/>
            <person name="Auberry K.J."/>
            <person name="Pasa-Tolic L."/>
            <person name="Wang D."/>
            <person name="Camp D.G. II"/>
            <person name="Rodland K."/>
            <person name="Wiley S."/>
            <person name="Britt W."/>
            <person name="Shenk T."/>
            <person name="Smith R.D."/>
            <person name="Nelson J.A."/>
        </authorList>
    </citation>
    <scope>IDENTIFICATION</scope>
</reference>
<reference key="5">
    <citation type="journal article" date="2004" name="J. Virol.">
        <authorList>
            <person name="Varnum S.M."/>
            <person name="Streblow D.N."/>
            <person name="Monroe M.E."/>
            <person name="Smith P."/>
            <person name="Auberry K.J."/>
            <person name="Pasa-Tolic L."/>
            <person name="Wang D."/>
            <person name="Camp D.G. II"/>
            <person name="Rodland K."/>
            <person name="Wiley S."/>
            <person name="Britt W."/>
            <person name="Shenk T."/>
            <person name="Smith R.D."/>
            <person name="Nelson J.A."/>
        </authorList>
    </citation>
    <scope>ERRATUM OF PUBMED:15452216</scope>
</reference>
<reference key="6">
    <citation type="journal article" date="1994" name="J. Virol.">
        <title>Protein-protein interactions between human cytomegalovirus IE2-580aa and pUL84 in lytically infected cells.</title>
        <authorList>
            <person name="Spector D.J."/>
            <person name="Tevethia M.J."/>
        </authorList>
    </citation>
    <scope>INTERACTION WITH IE2</scope>
</reference>
<reference key="7">
    <citation type="journal article" date="1996" name="J. Virol.">
        <title>Evidence that the UL84 gene product of human cytomegalovirus is essential for promoting oriLyt-dependent DNA replication and formation of replication compartments in cotransfection assays.</title>
        <authorList>
            <person name="Sarisky R.T."/>
            <person name="Hayward G.S."/>
        </authorList>
    </citation>
    <scope>FUNCTION</scope>
</reference>
<reference key="8">
    <citation type="journal article" date="2002" name="J. Virol.">
        <title>Human cytomegalovirus UL84 localizes to the cell nucleus via a nuclear localization signal and is a component of viral replication compartments.</title>
        <authorList>
            <person name="Xu Y."/>
            <person name="Colletti K.S."/>
            <person name="Pari G.S."/>
        </authorList>
    </citation>
    <scope>SUBCELLULAR LOCATION</scope>
    <scope>NUCLEAR LOCALIZATION SIGNAL</scope>
</reference>
<reference key="9">
    <citation type="journal article" date="2006" name="J. Virol.">
        <title>Human cytomegalovirus UL84 protein contains two nuclear export signals and shuttles between the nucleus and the cytoplasm.</title>
        <authorList>
            <person name="Lischka P."/>
            <person name="Rauh C."/>
            <person name="Mueller R."/>
            <person name="Stamminger T."/>
        </authorList>
    </citation>
    <scope>REGION</scope>
</reference>
<reference key="10">
    <citation type="journal article" date="2009" name="J. Virol.">
        <title>Analysis of the association of the human cytomegalovirus DNA polymerase subunit UL44 with the viral DNA replication factor UL84.</title>
        <authorList>
            <person name="Strang B.L."/>
            <person name="Sinigalia E."/>
            <person name="Silva L.A."/>
            <person name="Coen D.M."/>
            <person name="Loregian A."/>
        </authorList>
    </citation>
    <scope>INTERACTION WITH UL44</scope>
</reference>
<reference key="11">
    <citation type="journal article" date="2009" name="Virology">
        <title>Interaction of HCMV UL84 with C/EBPalpha transcription factor binding sites within oriLyt is essential for lytic DNA replication.</title>
        <authorList>
            <person name="Kagele D."/>
            <person name="Gao Y."/>
            <person name="Smallenburg K."/>
            <person name="Pari G.S."/>
        </authorList>
    </citation>
    <scope>FUNCTION</scope>
</reference>
<reference key="12">
    <citation type="journal article" date="2012" name="Virology">
        <title>Analysis of the interactions of viral and cellular factors with human cytomegalovirus lytic origin of replication, oriLyt.</title>
        <authorList>
            <person name="Kagele D."/>
            <person name="Rossetto C.C."/>
            <person name="Tarrant M.T."/>
            <person name="Pari G.S."/>
        </authorList>
    </citation>
    <scope>INTERACTION WITH HOST HNRNPK</scope>
</reference>
<name>UL84_HCMVA</name>
<accession>P16727</accession>
<accession>Q7M6K7</accession>
<keyword id="KW-1035">Host cytoplasm</keyword>
<keyword id="KW-1048">Host nucleus</keyword>
<keyword id="KW-1185">Reference proteome</keyword>
<feature type="chain" id="PRO_0000116297" description="Protein UL84">
    <location>
        <begin position="1"/>
        <end position="586"/>
    </location>
</feature>
<feature type="region of interest" description="Disordered" evidence="1">
    <location>
        <begin position="1"/>
        <end position="47"/>
    </location>
</feature>
<feature type="region of interest" description="Disordered" evidence="1">
    <location>
        <begin position="136"/>
        <end position="183"/>
    </location>
</feature>
<feature type="short sequence motif" description="Nuclear localization signal">
    <location>
        <begin position="161"/>
        <end position="170"/>
    </location>
</feature>
<feature type="short sequence motif" description="Nuclear export signal 1 (NES 1)">
    <location>
        <begin position="228"/>
        <end position="237"/>
    </location>
</feature>
<feature type="short sequence motif" description="Nuclear export signal 2 (NES 2)">
    <location>
        <begin position="359"/>
        <end position="366"/>
    </location>
</feature>
<feature type="compositionally biased region" description="Basic residues" evidence="1">
    <location>
        <begin position="10"/>
        <end position="19"/>
    </location>
</feature>
<feature type="compositionally biased region" description="Basic residues" evidence="1">
    <location>
        <begin position="32"/>
        <end position="41"/>
    </location>
</feature>
<feature type="compositionally biased region" description="Basic and acidic residues" evidence="1">
    <location>
        <begin position="155"/>
        <end position="170"/>
    </location>
</feature>
<comment type="function">
    <text evidence="4 7">Plays an essential role in viral DNA replication. May participate in the DNA replication initiation by interacting with the origin of lytic replication, oriLyt and subsequently recruiting other viral/cellular factors. Additionally, interacts with and shuttles IRS1 viral mRNA from the host nucleus to the cytoplasm.</text>
</comment>
<comment type="subunit">
    <text evidence="3 5 6">Interacts with the DNA polymerase accessory subunit UL44. Interacts with HCMV major transcription-activating enzyme IE2. Interacts with host HNRNPK.</text>
</comment>
<comment type="subcellular location">
    <subcellularLocation>
        <location evidence="2">Host nucleus</location>
    </subcellularLocation>
    <subcellularLocation>
        <location evidence="2">Host cytoplasm</location>
    </subcellularLocation>
    <text>Shuttles between host nucleus and cytoplasm. In the nucleus, colocalizes with UL44 and IE2 in the viral DNA replication compartments.</text>
</comment>
<comment type="similarity">
    <text evidence="8">Belongs to the HHV-5 UL84 protein family.</text>
</comment>
<sequence>MPRVDPNLRNRARRPRARRGGGGGVGSNSSRHSGKCRRQRRALSAPPLTFLATTTTTTMMGVASTDDDSLLLKTPDELDKYSGSPQTILTLTDKHDIRQPRVHRGTYHLIQLHLDLRPEELRDPFQILLSTPLQLGEANDESQTAPATLQEEETAASHEPEKKKEKQEKKEEDEDDRNDDRERGILCVVSNEDSDVRPAFSLFPARPGCHILRSVIDQQLTRMAIVRLSLNLFALRIITPLLKRLPLRRKAAHHTALHDCLALHLPELTFEPTLDINNVTENAASVADTAESTDADLTPTLTVRVRHALCWHRVEGGISGPRGLTSRISARLSETTAKTLGPSVFGRLELDPNESPPDLTLSSLTLYQDGILRFNVTCDRTEAPADPVAFRLRLRRETVRRPFFSDAPLPYFVPPRSGAADEGLEVRVPYELTLKNSHTLRIYRRFYGPYLGVFVPHNRQGLKMPVTVWLPRSWLELTVLVSDENGATFPRDALLGRLYFISSKHTLNRGCLSAMTHQVKSTLHSRSTSHSPSQQQLSVLGASIALEDLLPMRLASPETEPQDCKLTENTTEKTSPVTLAMVCGDL</sequence>
<evidence type="ECO:0000256" key="1">
    <source>
        <dbReference type="SAM" id="MobiDB-lite"/>
    </source>
</evidence>
<evidence type="ECO:0000269" key="2">
    <source>
    </source>
</evidence>
<evidence type="ECO:0000269" key="3">
    <source>
    </source>
</evidence>
<evidence type="ECO:0000269" key="4">
    <source>
    </source>
</evidence>
<evidence type="ECO:0000269" key="5">
    <source>
    </source>
</evidence>
<evidence type="ECO:0000269" key="6">
    <source>
    </source>
</evidence>
<evidence type="ECO:0000269" key="7">
    <source>
    </source>
</evidence>
<evidence type="ECO:0000305" key="8"/>
<proteinExistence type="evidence at protein level"/>
<organismHost>
    <name type="scientific">Homo sapiens</name>
    <name type="common">Human</name>
    <dbReference type="NCBI Taxonomy" id="9606"/>
</organismHost>